<keyword id="KW-1185">Reference proteome</keyword>
<feature type="chain" id="PRO_0000258833" description="UPF0301 protein Jann_3896">
    <location>
        <begin position="1"/>
        <end position="192"/>
    </location>
</feature>
<sequence length="192" mass="21013">MAMPDLTHDLTGKLLIAMPGMEDPRFAGAVIFLCVHSPGQAMGLIINKPMEEITFTELMEQLDIPKRGSTPQVPVCFGGPVDMRRGFVLHSPDYAPRGEEALRIDHRFAMTGTLDILEDIAAGRGPKRSLLALGYAGWGEGQLEAEIARNDWLTADATPELVFDHKMERKWDAAVQSLGFDPLMLSSEAGHA</sequence>
<protein>
    <recommendedName>
        <fullName evidence="1">UPF0301 protein Jann_3896</fullName>
    </recommendedName>
</protein>
<gene>
    <name type="ordered locus">Jann_3896</name>
</gene>
<comment type="similarity">
    <text evidence="1">Belongs to the UPF0301 (AlgH) family.</text>
</comment>
<reference key="1">
    <citation type="submission" date="2006-02" db="EMBL/GenBank/DDBJ databases">
        <title>Complete sequence of chromosome of Jannaschia sp. CCS1.</title>
        <authorList>
            <consortium name="US DOE Joint Genome Institute"/>
            <person name="Copeland A."/>
            <person name="Lucas S."/>
            <person name="Lapidus A."/>
            <person name="Barry K."/>
            <person name="Detter J.C."/>
            <person name="Glavina del Rio T."/>
            <person name="Hammon N."/>
            <person name="Israni S."/>
            <person name="Pitluck S."/>
            <person name="Brettin T."/>
            <person name="Bruce D."/>
            <person name="Han C."/>
            <person name="Tapia R."/>
            <person name="Gilna P."/>
            <person name="Chertkov O."/>
            <person name="Saunders E."/>
            <person name="Schmutz J."/>
            <person name="Larimer F."/>
            <person name="Land M."/>
            <person name="Kyrpides N."/>
            <person name="Lykidis A."/>
            <person name="Moran M.A."/>
            <person name="Belas R."/>
            <person name="Ye W."/>
            <person name="Buchan A."/>
            <person name="Gonzalez J.M."/>
            <person name="Schell M.A."/>
            <person name="Richardson P."/>
        </authorList>
    </citation>
    <scope>NUCLEOTIDE SEQUENCE [LARGE SCALE GENOMIC DNA]</scope>
    <source>
        <strain>CCS1</strain>
    </source>
</reference>
<evidence type="ECO:0000255" key="1">
    <source>
        <dbReference type="HAMAP-Rule" id="MF_00758"/>
    </source>
</evidence>
<accession>Q28KE9</accession>
<dbReference type="EMBL" id="CP000264">
    <property type="protein sequence ID" value="ABD56813.1"/>
    <property type="molecule type" value="Genomic_DNA"/>
</dbReference>
<dbReference type="RefSeq" id="WP_011457010.1">
    <property type="nucleotide sequence ID" value="NC_007802.1"/>
</dbReference>
<dbReference type="SMR" id="Q28KE9"/>
<dbReference type="STRING" id="290400.Jann_3896"/>
<dbReference type="KEGG" id="jan:Jann_3896"/>
<dbReference type="eggNOG" id="COG1678">
    <property type="taxonomic scope" value="Bacteria"/>
</dbReference>
<dbReference type="HOGENOM" id="CLU_057596_1_0_5"/>
<dbReference type="OrthoDB" id="9807486at2"/>
<dbReference type="Proteomes" id="UP000008326">
    <property type="component" value="Chromosome"/>
</dbReference>
<dbReference type="GO" id="GO:0005829">
    <property type="term" value="C:cytosol"/>
    <property type="evidence" value="ECO:0007669"/>
    <property type="project" value="TreeGrafter"/>
</dbReference>
<dbReference type="Gene3D" id="3.40.1740.10">
    <property type="entry name" value="VC0467-like"/>
    <property type="match status" value="1"/>
</dbReference>
<dbReference type="HAMAP" id="MF_00758">
    <property type="entry name" value="UPF0301"/>
    <property type="match status" value="1"/>
</dbReference>
<dbReference type="InterPro" id="IPR003774">
    <property type="entry name" value="AlgH-like"/>
</dbReference>
<dbReference type="NCBIfam" id="NF001268">
    <property type="entry name" value="PRK00228.1-4"/>
    <property type="match status" value="1"/>
</dbReference>
<dbReference type="PANTHER" id="PTHR30327">
    <property type="entry name" value="UNCHARACTERIZED PROTEIN YQGE"/>
    <property type="match status" value="1"/>
</dbReference>
<dbReference type="PANTHER" id="PTHR30327:SF1">
    <property type="entry name" value="UPF0301 PROTEIN YQGE"/>
    <property type="match status" value="1"/>
</dbReference>
<dbReference type="Pfam" id="PF02622">
    <property type="entry name" value="DUF179"/>
    <property type="match status" value="1"/>
</dbReference>
<dbReference type="SUPFAM" id="SSF143456">
    <property type="entry name" value="VC0467-like"/>
    <property type="match status" value="1"/>
</dbReference>
<proteinExistence type="inferred from homology"/>
<organism>
    <name type="scientific">Jannaschia sp. (strain CCS1)</name>
    <dbReference type="NCBI Taxonomy" id="290400"/>
    <lineage>
        <taxon>Bacteria</taxon>
        <taxon>Pseudomonadati</taxon>
        <taxon>Pseudomonadota</taxon>
        <taxon>Alphaproteobacteria</taxon>
        <taxon>Rhodobacterales</taxon>
        <taxon>Roseobacteraceae</taxon>
        <taxon>Jannaschia</taxon>
    </lineage>
</organism>
<name>Y3896_JANSC</name>